<organism>
    <name type="scientific">Homo sapiens</name>
    <name type="common">Human</name>
    <dbReference type="NCBI Taxonomy" id="9606"/>
    <lineage>
        <taxon>Eukaryota</taxon>
        <taxon>Metazoa</taxon>
        <taxon>Chordata</taxon>
        <taxon>Craniata</taxon>
        <taxon>Vertebrata</taxon>
        <taxon>Euteleostomi</taxon>
        <taxon>Mammalia</taxon>
        <taxon>Eutheria</taxon>
        <taxon>Euarchontoglires</taxon>
        <taxon>Primates</taxon>
        <taxon>Haplorrhini</taxon>
        <taxon>Catarrhini</taxon>
        <taxon>Hominidae</taxon>
        <taxon>Homo</taxon>
    </lineage>
</organism>
<dbReference type="EC" id="1.2.1.24" evidence="8 9 11 13"/>
<dbReference type="EMBL" id="Y11192">
    <property type="protein sequence ID" value="CAA72076.1"/>
    <property type="molecule type" value="mRNA"/>
</dbReference>
<dbReference type="EMBL" id="AJ427354">
    <property type="protein sequence ID" value="CAD20883.2"/>
    <property type="molecule type" value="mRNA"/>
</dbReference>
<dbReference type="EMBL" id="AJ427355">
    <property type="protein sequence ID" value="CAD20884.1"/>
    <property type="molecule type" value="mRNA"/>
</dbReference>
<dbReference type="EMBL" id="AK315380">
    <property type="protein sequence ID" value="BAG37773.1"/>
    <property type="molecule type" value="mRNA"/>
</dbReference>
<dbReference type="EMBL" id="AL031230">
    <property type="status" value="NOT_ANNOTATED_CDS"/>
    <property type="molecule type" value="Genomic_DNA"/>
</dbReference>
<dbReference type="EMBL" id="CH471087">
    <property type="protein sequence ID" value="EAW55452.1"/>
    <property type="molecule type" value="Genomic_DNA"/>
</dbReference>
<dbReference type="EMBL" id="CH471087">
    <property type="protein sequence ID" value="EAW55453.1"/>
    <property type="molecule type" value="Genomic_DNA"/>
</dbReference>
<dbReference type="EMBL" id="BC034321">
    <property type="protein sequence ID" value="AAH34321.1"/>
    <property type="molecule type" value="mRNA"/>
</dbReference>
<dbReference type="EMBL" id="L34820">
    <property type="protein sequence ID" value="AAA67057.1"/>
    <property type="molecule type" value="mRNA"/>
</dbReference>
<dbReference type="CCDS" id="CCDS4555.1">
    <molecule id="P51649-1"/>
</dbReference>
<dbReference type="CCDS" id="CCDS4556.1">
    <molecule id="P51649-2"/>
</dbReference>
<dbReference type="PIR" id="A55773">
    <property type="entry name" value="A55773"/>
</dbReference>
<dbReference type="RefSeq" id="NP_001071.1">
    <molecule id="P51649-1"/>
    <property type="nucleotide sequence ID" value="NM_001080.3"/>
</dbReference>
<dbReference type="RefSeq" id="NP_733936.1">
    <molecule id="P51649-2"/>
    <property type="nucleotide sequence ID" value="NM_170740.1"/>
</dbReference>
<dbReference type="PDB" id="2W8N">
    <property type="method" value="X-ray"/>
    <property type="resolution" value="2.00 A"/>
    <property type="chains" value="A=49-535"/>
</dbReference>
<dbReference type="PDB" id="2W8O">
    <property type="method" value="X-ray"/>
    <property type="resolution" value="3.40 A"/>
    <property type="chains" value="A=49-535"/>
</dbReference>
<dbReference type="PDB" id="2W8P">
    <property type="method" value="X-ray"/>
    <property type="resolution" value="2.30 A"/>
    <property type="chains" value="A=49-535"/>
</dbReference>
<dbReference type="PDB" id="2W8Q">
    <property type="method" value="X-ray"/>
    <property type="resolution" value="2.40 A"/>
    <property type="chains" value="A=49-535"/>
</dbReference>
<dbReference type="PDB" id="2W8R">
    <property type="method" value="X-ray"/>
    <property type="resolution" value="2.40 A"/>
    <property type="chains" value="A=49-535"/>
</dbReference>
<dbReference type="PDBsum" id="2W8N"/>
<dbReference type="PDBsum" id="2W8O"/>
<dbReference type="PDBsum" id="2W8P"/>
<dbReference type="PDBsum" id="2W8Q"/>
<dbReference type="PDBsum" id="2W8R"/>
<dbReference type="SMR" id="P51649"/>
<dbReference type="BioGRID" id="113645">
    <property type="interactions" value="63"/>
</dbReference>
<dbReference type="CORUM" id="P51649"/>
<dbReference type="FunCoup" id="P51649">
    <property type="interactions" value="998"/>
</dbReference>
<dbReference type="IntAct" id="P51649">
    <property type="interactions" value="29"/>
</dbReference>
<dbReference type="MINT" id="P51649"/>
<dbReference type="STRING" id="9606.ENSP00000314649"/>
<dbReference type="BindingDB" id="P51649"/>
<dbReference type="ChEMBL" id="CHEMBL1911"/>
<dbReference type="DrugBank" id="DB00534">
    <property type="generic name" value="Chlormerodrin"/>
</dbReference>
<dbReference type="DrugBank" id="DB00157">
    <property type="generic name" value="NADH"/>
</dbReference>
<dbReference type="DrugBank" id="DB09072">
    <property type="generic name" value="Sodium oxybate"/>
</dbReference>
<dbReference type="DrugBank" id="DB00139">
    <property type="generic name" value="Succinic acid"/>
</dbReference>
<dbReference type="DrugBank" id="DB00313">
    <property type="generic name" value="Valproic acid"/>
</dbReference>
<dbReference type="DrugCentral" id="P51649"/>
<dbReference type="GuidetoPHARMACOLOGY" id="2466"/>
<dbReference type="GlyGen" id="P51649">
    <property type="glycosylation" value="1 site, 1 O-linked glycan (1 site)"/>
</dbReference>
<dbReference type="iPTMnet" id="P51649"/>
<dbReference type="PhosphoSitePlus" id="P51649"/>
<dbReference type="SwissPalm" id="P51649"/>
<dbReference type="BioMuta" id="ALDH5A1"/>
<dbReference type="DMDM" id="7531278"/>
<dbReference type="jPOST" id="P51649"/>
<dbReference type="MassIVE" id="P51649"/>
<dbReference type="PaxDb" id="9606-ENSP00000314649"/>
<dbReference type="PeptideAtlas" id="P51649"/>
<dbReference type="ProteomicsDB" id="33829"/>
<dbReference type="ProteomicsDB" id="56358">
    <molecule id="P51649-1"/>
</dbReference>
<dbReference type="Pumba" id="P51649"/>
<dbReference type="Antibodypedia" id="25307">
    <property type="antibodies" value="445 antibodies from 33 providers"/>
</dbReference>
<dbReference type="DNASU" id="7915"/>
<dbReference type="Ensembl" id="ENST00000348925.2">
    <molecule id="P51649-2"/>
    <property type="protein sequence ID" value="ENSP00000314649.3"/>
    <property type="gene ID" value="ENSG00000112294.14"/>
</dbReference>
<dbReference type="Ensembl" id="ENST00000357578.8">
    <molecule id="P51649-1"/>
    <property type="protein sequence ID" value="ENSP00000350191.3"/>
    <property type="gene ID" value="ENSG00000112294.14"/>
</dbReference>
<dbReference type="GeneID" id="7915"/>
<dbReference type="KEGG" id="hsa:7915"/>
<dbReference type="MANE-Select" id="ENST00000357578.8">
    <property type="protein sequence ID" value="ENSP00000350191.3"/>
    <property type="RefSeq nucleotide sequence ID" value="NM_001080.3"/>
    <property type="RefSeq protein sequence ID" value="NP_001071.1"/>
</dbReference>
<dbReference type="AGR" id="HGNC:408"/>
<dbReference type="CTD" id="7915"/>
<dbReference type="DisGeNET" id="7915"/>
<dbReference type="GeneCards" id="ALDH5A1"/>
<dbReference type="GeneReviews" id="ALDH5A1"/>
<dbReference type="HGNC" id="HGNC:408">
    <property type="gene designation" value="ALDH5A1"/>
</dbReference>
<dbReference type="HPA" id="ENSG00000112294">
    <property type="expression patterns" value="Tissue enhanced (liver)"/>
</dbReference>
<dbReference type="MalaCards" id="ALDH5A1"/>
<dbReference type="MIM" id="271980">
    <property type="type" value="phenotype"/>
</dbReference>
<dbReference type="MIM" id="610045">
    <property type="type" value="gene"/>
</dbReference>
<dbReference type="neXtProt" id="NX_P51649"/>
<dbReference type="OpenTargets" id="ENSG00000112294"/>
<dbReference type="Orphanet" id="22">
    <property type="disease" value="Succinic semialdehyde dehydrogenase deficiency"/>
</dbReference>
<dbReference type="PharmGKB" id="PA24702"/>
<dbReference type="VEuPathDB" id="HostDB:ENSG00000112294"/>
<dbReference type="eggNOG" id="KOG2451">
    <property type="taxonomic scope" value="Eukaryota"/>
</dbReference>
<dbReference type="GeneTree" id="ENSGT00930000151038"/>
<dbReference type="HOGENOM" id="CLU_005391_5_1_1"/>
<dbReference type="InParanoid" id="P51649"/>
<dbReference type="OMA" id="IGELFCK"/>
<dbReference type="OrthoDB" id="310895at2759"/>
<dbReference type="PAN-GO" id="P51649">
    <property type="GO annotations" value="3 GO annotations based on evolutionary models"/>
</dbReference>
<dbReference type="PhylomeDB" id="P51649"/>
<dbReference type="TreeFam" id="TF352906"/>
<dbReference type="BioCyc" id="MetaCyc:HS03550-MONOMER"/>
<dbReference type="BRENDA" id="1.2.1.24">
    <property type="organism ID" value="2681"/>
</dbReference>
<dbReference type="PathwayCommons" id="P51649"/>
<dbReference type="Reactome" id="R-HSA-916853">
    <property type="pathway name" value="Degradation of GABA"/>
</dbReference>
<dbReference type="SABIO-RK" id="P51649"/>
<dbReference type="SignaLink" id="P51649"/>
<dbReference type="SIGNOR" id="P51649"/>
<dbReference type="UniPathway" id="UPA00733"/>
<dbReference type="BioGRID-ORCS" id="7915">
    <property type="hits" value="8 hits in 1158 CRISPR screens"/>
</dbReference>
<dbReference type="CD-CODE" id="91857CE7">
    <property type="entry name" value="Nucleolus"/>
</dbReference>
<dbReference type="CD-CODE" id="FB4E32DD">
    <property type="entry name" value="Presynaptic clusters and postsynaptic densities"/>
</dbReference>
<dbReference type="ChiTaRS" id="ALDH5A1">
    <property type="organism name" value="human"/>
</dbReference>
<dbReference type="EvolutionaryTrace" id="P51649"/>
<dbReference type="GeneWiki" id="Aldehyde_dehydrogenase_5_family,_member_A1"/>
<dbReference type="GenomeRNAi" id="7915"/>
<dbReference type="Pharos" id="P51649">
    <property type="development level" value="Tclin"/>
</dbReference>
<dbReference type="PRO" id="PR:P51649"/>
<dbReference type="Proteomes" id="UP000005640">
    <property type="component" value="Chromosome 6"/>
</dbReference>
<dbReference type="RNAct" id="P51649">
    <property type="molecule type" value="protein"/>
</dbReference>
<dbReference type="Bgee" id="ENSG00000112294">
    <property type="expression patterns" value="Expressed in skeletal muscle tissue of biceps brachii and 192 other cell types or tissues"/>
</dbReference>
<dbReference type="ExpressionAtlas" id="P51649">
    <property type="expression patterns" value="baseline and differential"/>
</dbReference>
<dbReference type="GO" id="GO:0005759">
    <property type="term" value="C:mitochondrial matrix"/>
    <property type="evidence" value="ECO:0000304"/>
    <property type="project" value="Reactome"/>
</dbReference>
<dbReference type="GO" id="GO:0005739">
    <property type="term" value="C:mitochondrion"/>
    <property type="evidence" value="ECO:0000314"/>
    <property type="project" value="HPA"/>
</dbReference>
<dbReference type="GO" id="GO:0045202">
    <property type="term" value="C:synapse"/>
    <property type="evidence" value="ECO:0007669"/>
    <property type="project" value="GOC"/>
</dbReference>
<dbReference type="GO" id="GO:0042802">
    <property type="term" value="F:identical protein binding"/>
    <property type="evidence" value="ECO:0000353"/>
    <property type="project" value="UniProtKB"/>
</dbReference>
<dbReference type="GO" id="GO:0004777">
    <property type="term" value="F:succinate-semialdehyde dehydrogenase (NAD+) activity"/>
    <property type="evidence" value="ECO:0000314"/>
    <property type="project" value="UniProtKB"/>
</dbReference>
<dbReference type="GO" id="GO:0007417">
    <property type="term" value="P:central nervous system development"/>
    <property type="evidence" value="ECO:0000315"/>
    <property type="project" value="UniProtKB"/>
</dbReference>
<dbReference type="GO" id="GO:0009450">
    <property type="term" value="P:gamma-aminobutyric acid catabolic process"/>
    <property type="evidence" value="ECO:0000314"/>
    <property type="project" value="UniProtKB"/>
</dbReference>
<dbReference type="GO" id="GO:0006536">
    <property type="term" value="P:glutamate metabolic process"/>
    <property type="evidence" value="ECO:0000250"/>
    <property type="project" value="UniProtKB"/>
</dbReference>
<dbReference type="GO" id="GO:0009791">
    <property type="term" value="P:post-embryonic development"/>
    <property type="evidence" value="ECO:0007669"/>
    <property type="project" value="Ensembl"/>
</dbReference>
<dbReference type="GO" id="GO:0006105">
    <property type="term" value="P:succinate metabolic process"/>
    <property type="evidence" value="ECO:0000250"/>
    <property type="project" value="UniProtKB"/>
</dbReference>
<dbReference type="GO" id="GO:0051932">
    <property type="term" value="P:synaptic transmission, GABAergic"/>
    <property type="evidence" value="ECO:0007669"/>
    <property type="project" value="Ensembl"/>
</dbReference>
<dbReference type="CDD" id="cd07103">
    <property type="entry name" value="ALDH_F5_SSADH_GabD"/>
    <property type="match status" value="1"/>
</dbReference>
<dbReference type="FunFam" id="3.40.605.10:FF:000026">
    <property type="entry name" value="Aldehyde dehydrogenase, putative"/>
    <property type="match status" value="1"/>
</dbReference>
<dbReference type="FunFam" id="3.40.309.10:FF:000004">
    <property type="entry name" value="Succinate-semialdehyde dehydrogenase I"/>
    <property type="match status" value="1"/>
</dbReference>
<dbReference type="FunFam" id="3.40.605.10:FF:000096">
    <property type="entry name" value="Succinate-semialdehyde dehydrogenase, mitochondrial"/>
    <property type="match status" value="1"/>
</dbReference>
<dbReference type="Gene3D" id="3.40.605.10">
    <property type="entry name" value="Aldehyde Dehydrogenase, Chain A, domain 1"/>
    <property type="match status" value="1"/>
</dbReference>
<dbReference type="Gene3D" id="3.40.309.10">
    <property type="entry name" value="Aldehyde Dehydrogenase, Chain A, domain 2"/>
    <property type="match status" value="1"/>
</dbReference>
<dbReference type="InterPro" id="IPR016161">
    <property type="entry name" value="Ald_DH/histidinol_DH"/>
</dbReference>
<dbReference type="InterPro" id="IPR016163">
    <property type="entry name" value="Ald_DH_C"/>
</dbReference>
<dbReference type="InterPro" id="IPR016160">
    <property type="entry name" value="Ald_DH_CS_CYS"/>
</dbReference>
<dbReference type="InterPro" id="IPR029510">
    <property type="entry name" value="Ald_DH_CS_GLU"/>
</dbReference>
<dbReference type="InterPro" id="IPR016162">
    <property type="entry name" value="Ald_DH_N"/>
</dbReference>
<dbReference type="InterPro" id="IPR015590">
    <property type="entry name" value="Aldehyde_DH_dom"/>
</dbReference>
<dbReference type="InterPro" id="IPR050740">
    <property type="entry name" value="Aldehyde_DH_Superfamily"/>
</dbReference>
<dbReference type="InterPro" id="IPR010102">
    <property type="entry name" value="Succ_semiAld_DH"/>
</dbReference>
<dbReference type="NCBIfam" id="TIGR01780">
    <property type="entry name" value="SSADH"/>
    <property type="match status" value="1"/>
</dbReference>
<dbReference type="PANTHER" id="PTHR43353">
    <property type="entry name" value="SUCCINATE-SEMIALDEHYDE DEHYDROGENASE, MITOCHONDRIAL"/>
    <property type="match status" value="1"/>
</dbReference>
<dbReference type="PANTHER" id="PTHR43353:SF5">
    <property type="entry name" value="SUCCINATE-SEMIALDEHYDE DEHYDROGENASE, MITOCHONDRIAL"/>
    <property type="match status" value="1"/>
</dbReference>
<dbReference type="Pfam" id="PF00171">
    <property type="entry name" value="Aldedh"/>
    <property type="match status" value="1"/>
</dbReference>
<dbReference type="SUPFAM" id="SSF53720">
    <property type="entry name" value="ALDH-like"/>
    <property type="match status" value="1"/>
</dbReference>
<dbReference type="PROSITE" id="PS00070">
    <property type="entry name" value="ALDEHYDE_DEHYDR_CYS"/>
    <property type="match status" value="1"/>
</dbReference>
<dbReference type="PROSITE" id="PS00687">
    <property type="entry name" value="ALDEHYDE_DEHYDR_GLU"/>
    <property type="match status" value="1"/>
</dbReference>
<keyword id="KW-0002">3D-structure</keyword>
<keyword id="KW-0007">Acetylation</keyword>
<keyword id="KW-0025">Alternative splicing</keyword>
<keyword id="KW-0225">Disease variant</keyword>
<keyword id="KW-1015">Disulfide bond</keyword>
<keyword id="KW-0496">Mitochondrion</keyword>
<keyword id="KW-0520">NAD</keyword>
<keyword id="KW-0560">Oxidoreductase</keyword>
<keyword id="KW-0597">Phosphoprotein</keyword>
<keyword id="KW-1267">Proteomics identification</keyword>
<keyword id="KW-1185">Reference proteome</keyword>
<keyword id="KW-0809">Transit peptide</keyword>
<protein>
    <recommendedName>
        <fullName evidence="15">Succinate-semialdehyde dehydrogenase, mitochondrial</fullName>
        <ecNumber evidence="8 9 11 13">1.2.1.24</ecNumber>
    </recommendedName>
    <alternativeName>
        <fullName>Aldehyde dehydrogenase family 5 member A1</fullName>
    </alternativeName>
    <alternativeName>
        <fullName>NAD(+)-dependent succinic semialdehyde dehydrogenase</fullName>
    </alternativeName>
</protein>
<gene>
    <name evidence="20" type="primary">ALDH5A1</name>
    <name type="synonym">SSADH</name>
</gene>
<name>SSDH_HUMAN</name>
<sequence>MATCIWLRSCGARRLGSTFPGCRLRPRAGGLVPASGPAPGPAQLRCYAGRLAGLSAALLRTDSFVGGRWLPAAATFPVQDPASGAALGMVADCGVREARAAVRAAYEAFCRWREVSAKERSSLLRKWYNLMIQNKDDLARIITAESGKPLKEAHGEILYSAFFLEWFSEEARRVYGDIIHTPAKDRRALVLKQPIGVAAVITPWNFPSAMITRKVGAALAAGCTVVVKPAEDTPFSALALAELASQAGIPSGVYNVIPCSRKNAKEVGEAICTDPLVSKISFTGSTTTGKILLHHAANSVKRVSMELGGLAPFIVFDSANVDQAVAGAMASKFRNTGQTCVCSNQFLVQRGIHDAFVKAFAEAMKKNLRVGNGFEEGTTQGPLINEKAVEKVEKQVNDAVSKGATVVTGGKRHQLGKNFFEPTLLCNVTQDMLCTHEETFGPLAPVIKFDTEEEAIAIANAADVGLAGYFYSQDPAQIWRVAEQLEVGMVGVNEGLISSVECPFGGVKQSGLGREGSKYGIDEYLELKYVCYGGL</sequence>
<comment type="function">
    <text evidence="11">Catalyzes one step in the degradation of the inhibitory neurotransmitter gamma-aminobutyric acid (GABA).</text>
</comment>
<comment type="catalytic activity">
    <reaction evidence="8 9 11 13">
        <text>succinate semialdehyde + NAD(+) + H2O = succinate + NADH + 2 H(+)</text>
        <dbReference type="Rhea" id="RHEA:13217"/>
        <dbReference type="ChEBI" id="CHEBI:15377"/>
        <dbReference type="ChEBI" id="CHEBI:15378"/>
        <dbReference type="ChEBI" id="CHEBI:30031"/>
        <dbReference type="ChEBI" id="CHEBI:57540"/>
        <dbReference type="ChEBI" id="CHEBI:57706"/>
        <dbReference type="ChEBI" id="CHEBI:57945"/>
        <dbReference type="EC" id="1.2.1.24"/>
    </reaction>
    <physiologicalReaction direction="left-to-right" evidence="16 17 18 19">
        <dbReference type="Rhea" id="RHEA:13218"/>
    </physiologicalReaction>
</comment>
<comment type="activity regulation">
    <text evidence="11">Redox-regulated. Inhibited under oxydizing conditions. Inhibited by hydrogen peroxide H(2)O(2).</text>
</comment>
<comment type="pathway">
    <text evidence="16 17 18 19">Amino-acid degradation; 4-aminobutanoate degradation.</text>
</comment>
<comment type="subunit">
    <text evidence="11 12">Homotetramer.</text>
</comment>
<comment type="subcellular location">
    <subcellularLocation>
        <location>Mitochondrion</location>
    </subcellularLocation>
</comment>
<comment type="alternative products">
    <event type="alternative splicing"/>
    <isoform>
        <id>P51649-1</id>
        <name>1</name>
        <sequence type="displayed"/>
    </isoform>
    <isoform>
        <id>P51649-2</id>
        <name>2</name>
        <sequence type="described" ref="VSP_045231"/>
    </isoform>
</comment>
<comment type="tissue specificity">
    <text>Brain, pancreas, heart, liver, skeletal muscle and kidney. Lower in placenta.</text>
</comment>
<comment type="disease" evidence="6 7 9">
    <disease id="DI-02345">
        <name>Succinic semialdehyde dehydrogenase deficiency</name>
        <acronym>SSADHD</acronym>
        <description>A rare inborn error of 4-aminobutyric acid (GABA) metabolism, which leads to accumulation of 4-hydroxybutyric acid in physiologic fluids of patients. The disease is clinically characterized by developmental delay, hypotonia, intellectual disability, ataxia, seizures, hyperkinetic behavior, aggression, and sleep disturbances.</description>
        <dbReference type="MIM" id="271980"/>
    </disease>
    <text>The disease is caused by variants affecting the gene represented in this entry.</text>
</comment>
<comment type="similarity">
    <text evidence="15">Belongs to the aldehyde dehydrogenase family.</text>
</comment>
<feature type="transit peptide" description="Mitochondrion" evidence="3">
    <location>
        <begin position="1"/>
        <end position="47"/>
    </location>
</feature>
<feature type="chain" id="PRO_0000007184" description="Succinate-semialdehyde dehydrogenase, mitochondrial">
    <location>
        <begin position="48"/>
        <end position="535"/>
    </location>
</feature>
<feature type="active site" description="Proton acceptor" evidence="4">
    <location>
        <position position="306"/>
    </location>
</feature>
<feature type="active site" description="Nucleophile" evidence="5">
    <location>
        <position position="340"/>
    </location>
</feature>
<feature type="binding site" evidence="1">
    <location>
        <begin position="202"/>
        <end position="204"/>
    </location>
    <ligand>
        <name>NAD(+)</name>
        <dbReference type="ChEBI" id="CHEBI:57540"/>
    </ligand>
</feature>
<feature type="binding site" evidence="11 21">
    <location>
        <position position="213"/>
    </location>
    <ligand>
        <name>substrate</name>
    </ligand>
</feature>
<feature type="binding site" evidence="11 22">
    <location>
        <begin position="228"/>
        <end position="231"/>
    </location>
    <ligand>
        <name>NAD(+)</name>
        <dbReference type="ChEBI" id="CHEBI:57540"/>
    </ligand>
</feature>
<feature type="binding site" evidence="11 22">
    <location>
        <begin position="284"/>
        <end position="289"/>
    </location>
    <ligand>
        <name>NAD(+)</name>
        <dbReference type="ChEBI" id="CHEBI:57540"/>
    </ligand>
</feature>
<feature type="binding site" evidence="1">
    <location>
        <position position="306"/>
    </location>
    <ligand>
        <name>NAD(+)</name>
        <dbReference type="ChEBI" id="CHEBI:57540"/>
    </ligand>
</feature>
<feature type="binding site" evidence="11 21">
    <location>
        <position position="334"/>
    </location>
    <ligand>
        <name>substrate</name>
    </ligand>
</feature>
<feature type="binding site" evidence="1">
    <location>
        <begin position="438"/>
        <end position="440"/>
    </location>
    <ligand>
        <name>NAD(+)</name>
        <dbReference type="ChEBI" id="CHEBI:57540"/>
    </ligand>
</feature>
<feature type="binding site" evidence="11 21">
    <location>
        <position position="498"/>
    </location>
    <ligand>
        <name>substrate</name>
    </ligand>
</feature>
<feature type="site" description="Transition state stabilizer" evidence="1">
    <location>
        <position position="205"/>
    </location>
</feature>
<feature type="modified residue" description="N6-acetyllysine; alternate" evidence="23">
    <location>
        <position position="126"/>
    </location>
</feature>
<feature type="modified residue" description="N6-succinyllysine; alternate" evidence="2">
    <location>
        <position position="126"/>
    </location>
</feature>
<feature type="modified residue" description="N6-succinyllysine" evidence="2">
    <location>
        <position position="135"/>
    </location>
</feature>
<feature type="modified residue" description="N6-succinyllysine" evidence="2">
    <location>
        <position position="184"/>
    </location>
</feature>
<feature type="modified residue" description="N6-acetyllysine; alternate" evidence="2">
    <location>
        <position position="265"/>
    </location>
</feature>
<feature type="modified residue" description="N6-succinyllysine; alternate" evidence="2">
    <location>
        <position position="265"/>
    </location>
</feature>
<feature type="modified residue" description="N6-acetyllysine" evidence="2">
    <location>
        <position position="365"/>
    </location>
</feature>
<feature type="modified residue" description="N6-succinyllysine" evidence="2">
    <location>
        <position position="402"/>
    </location>
</feature>
<feature type="modified residue" description="N6-acetyllysine" evidence="2">
    <location>
        <position position="411"/>
    </location>
</feature>
<feature type="modified residue" description="Phosphoserine" evidence="24">
    <location>
        <position position="499"/>
    </location>
</feature>
<feature type="disulfide bond" description="In inhibited form" evidence="11">
    <location>
        <begin position="340"/>
        <end position="342"/>
    </location>
</feature>
<feature type="splice variant" id="VSP_045231" description="In isoform 2." evidence="14">
    <original>E</original>
    <variation>EVNQGFLLDLDPLL</variation>
    <location>
        <position position="242"/>
    </location>
</feature>
<feature type="sequence variant" id="VAR_026227" description="No effect on succinate-semialdehyde dehydrogenase activity; dbSNP:rs4646832." evidence="8 9">
    <original>G</original>
    <variation>R</variation>
    <location>
        <position position="36"/>
    </location>
</feature>
<feature type="sequence variant" id="VAR_026199" description="In SSADHD; 3% of activity; dbSNP:rs765561257." evidence="9">
    <original>C</original>
    <variation>F</variation>
    <location>
        <position position="93"/>
    </location>
</feature>
<feature type="sequence variant" id="VAR_026200" description="In SSADHD; &lt;1% of activity; dbSNP:rs72552281." evidence="9">
    <original>G</original>
    <variation>R</variation>
    <location>
        <position position="176"/>
    </location>
</feature>
<feature type="sequence variant" id="VAR_016758" description="83% of activity; dbSNP:rs2760118." evidence="8 9 10">
    <original>H</original>
    <variation>Y</variation>
    <location>
        <position position="180"/>
    </location>
</feature>
<feature type="sequence variant" id="VAR_016759" description="48% of activity; dbSNP:rs3765310." evidence="8 9">
    <original>P</original>
    <variation>L</variation>
    <location>
        <position position="182"/>
    </location>
</feature>
<feature type="sequence variant" id="VAR_026201" description="In SSADHD; 5% of activity; dbSNP:rs72552282." evidence="9">
    <original>C</original>
    <variation>Y</variation>
    <location>
        <position position="223"/>
    </location>
</feature>
<feature type="sequence variant" id="VAR_026202" description="In SSADHD; 4% of activity; dbSNP:rs1326526453." evidence="9">
    <original>T</original>
    <variation>M</variation>
    <location>
        <position position="233"/>
    </location>
</feature>
<feature type="sequence variant" id="VAR_026228" description="65% of activity; dbSNP:rs62621664." evidence="8 9">
    <original>A</original>
    <variation>S</variation>
    <location>
        <position position="237"/>
    </location>
</feature>
<feature type="sequence variant" id="VAR_026203" description="In SSADHD; 17% of activity; dbSNP:rs145087265." evidence="9">
    <original>N</original>
    <variation>S</variation>
    <location>
        <position position="255"/>
    </location>
</feature>
<feature type="sequence variant" id="VAR_026204" description="In SSADHD; &lt;1% of activity; dbSNP:rs375628463." evidence="6 9">
    <original>G</original>
    <variation>E</variation>
    <location>
        <position position="268"/>
    </location>
</feature>
<feature type="sequence variant" id="VAR_026205" description="In SSADHD; 1% of activity; dbSNP:rs72552283." evidence="9">
    <original>N</original>
    <variation>K</variation>
    <location>
        <position position="335"/>
    </location>
</feature>
<feature type="sequence variant" id="VAR_069047" evidence="8">
    <original>N</original>
    <variation>S</variation>
    <location>
        <position position="372"/>
    </location>
</feature>
<feature type="sequence variant" id="VAR_026206" description="In SSADHD; 2% of activity." evidence="9">
    <original>P</original>
    <variation>L</variation>
    <location>
        <position position="382"/>
    </location>
</feature>
<feature type="sequence variant" id="VAR_026207" description="In SSADHD." evidence="9">
    <original>P</original>
    <variation>Q</variation>
    <location>
        <position position="382"/>
    </location>
</feature>
<feature type="sequence variant" id="VAR_026229" description="In dbSNP:rs143741652." evidence="8 9">
    <original>V</original>
    <variation>I</variation>
    <location>
        <position position="406"/>
    </location>
</feature>
<feature type="sequence variant" id="VAR_026208" description="In SSADHD; &lt;1% of activity; dbSNP:rs118203984." evidence="6 9">
    <original>G</original>
    <variation>D</variation>
    <location>
        <position position="409"/>
    </location>
</feature>
<feature type="sequence variant" id="VAR_026209" description="In SSADHD." evidence="7">
    <original>V</original>
    <variation>E</variation>
    <location>
        <position position="487"/>
    </location>
</feature>
<feature type="sequence variant" id="VAR_026210" description="In SSADHD; &lt;1% of activity; dbSNP:rs72552284." evidence="9">
    <original>G</original>
    <variation>R</variation>
    <location>
        <position position="533"/>
    </location>
</feature>
<feature type="mutagenesis site" description="Reduces catalytic activity to less than 15% of wild-type." evidence="11">
    <original>R</original>
    <variation>A</variation>
    <location>
        <position position="213"/>
    </location>
</feature>
<feature type="mutagenesis site" description="Reduces catalytic activity to less than 15% of wild-type." evidence="11">
    <original>R</original>
    <variation>A</variation>
    <location>
        <position position="334"/>
    </location>
</feature>
<feature type="mutagenesis site" description="Loss of regulation by redox state." evidence="11">
    <original>C</original>
    <variation>A</variation>
    <location>
        <position position="342"/>
    </location>
</feature>
<feature type="mutagenesis site" description="Reduces catalytic activity to less than 15% of wild-type." evidence="11">
    <original>S</original>
    <variation>A</variation>
    <location>
        <position position="498"/>
    </location>
</feature>
<feature type="turn" evidence="27">
    <location>
        <begin position="56"/>
        <end position="58"/>
    </location>
</feature>
<feature type="strand" evidence="25">
    <location>
        <begin position="62"/>
        <end position="65"/>
    </location>
</feature>
<feature type="strand" evidence="25">
    <location>
        <begin position="68"/>
        <end position="70"/>
    </location>
</feature>
<feature type="strand" evidence="25">
    <location>
        <begin position="75"/>
        <end position="79"/>
    </location>
</feature>
<feature type="turn" evidence="25">
    <location>
        <begin position="81"/>
        <end position="83"/>
    </location>
</feature>
<feature type="strand" evidence="25">
    <location>
        <begin position="86"/>
        <end position="91"/>
    </location>
</feature>
<feature type="helix" evidence="25">
    <location>
        <begin position="95"/>
        <end position="112"/>
    </location>
</feature>
<feature type="helix" evidence="25">
    <location>
        <begin position="117"/>
        <end position="133"/>
    </location>
</feature>
<feature type="helix" evidence="25">
    <location>
        <begin position="135"/>
        <end position="146"/>
    </location>
</feature>
<feature type="helix" evidence="25">
    <location>
        <begin position="150"/>
        <end position="170"/>
    </location>
</feature>
<feature type="helix" evidence="25">
    <location>
        <begin position="171"/>
        <end position="173"/>
    </location>
</feature>
<feature type="strand" evidence="25">
    <location>
        <begin position="177"/>
        <end position="179"/>
    </location>
</feature>
<feature type="strand" evidence="25">
    <location>
        <begin position="187"/>
        <end position="194"/>
    </location>
</feature>
<feature type="strand" evidence="25">
    <location>
        <begin position="197"/>
        <end position="201"/>
    </location>
</feature>
<feature type="strand" evidence="25">
    <location>
        <begin position="204"/>
        <end position="206"/>
    </location>
</feature>
<feature type="helix" evidence="25">
    <location>
        <begin position="209"/>
        <end position="221"/>
    </location>
</feature>
<feature type="strand" evidence="25">
    <location>
        <begin position="224"/>
        <end position="228"/>
    </location>
</feature>
<feature type="helix" evidence="25">
    <location>
        <begin position="235"/>
        <end position="247"/>
    </location>
</feature>
<feature type="strand" evidence="25">
    <location>
        <begin position="253"/>
        <end position="256"/>
    </location>
</feature>
<feature type="helix" evidence="25">
    <location>
        <begin position="261"/>
        <end position="271"/>
    </location>
</feature>
<feature type="strand" evidence="25">
    <location>
        <begin position="277"/>
        <end position="284"/>
    </location>
</feature>
<feature type="helix" evidence="25">
    <location>
        <begin position="286"/>
        <end position="297"/>
    </location>
</feature>
<feature type="turn" evidence="25">
    <location>
        <begin position="298"/>
        <end position="300"/>
    </location>
</feature>
<feature type="strand" evidence="25">
    <location>
        <begin position="302"/>
        <end position="307"/>
    </location>
</feature>
<feature type="strand" evidence="25">
    <location>
        <begin position="309"/>
        <end position="315"/>
    </location>
</feature>
<feature type="strand" evidence="26">
    <location>
        <begin position="317"/>
        <end position="319"/>
    </location>
</feature>
<feature type="helix" evidence="25">
    <location>
        <begin position="321"/>
        <end position="332"/>
    </location>
</feature>
<feature type="helix" evidence="27">
    <location>
        <begin position="334"/>
        <end position="337"/>
    </location>
</feature>
<feature type="strand" evidence="25">
    <location>
        <begin position="341"/>
        <end position="349"/>
    </location>
</feature>
<feature type="helix" evidence="25">
    <location>
        <begin position="350"/>
        <end position="367"/>
    </location>
</feature>
<feature type="strand" evidence="26">
    <location>
        <begin position="373"/>
        <end position="375"/>
    </location>
</feature>
<feature type="helix" evidence="25">
    <location>
        <begin position="386"/>
        <end position="400"/>
    </location>
</feature>
<feature type="turn" evidence="25">
    <location>
        <begin position="401"/>
        <end position="403"/>
    </location>
</feature>
<feature type="strand" evidence="25">
    <location>
        <begin position="405"/>
        <end position="408"/>
    </location>
</feature>
<feature type="strand" evidence="25">
    <location>
        <begin position="423"/>
        <end position="428"/>
    </location>
</feature>
<feature type="helix" evidence="25">
    <location>
        <begin position="430"/>
        <end position="433"/>
    </location>
</feature>
<feature type="strand" evidence="25">
    <location>
        <begin position="441"/>
        <end position="450"/>
    </location>
</feature>
<feature type="helix" evidence="25">
    <location>
        <begin position="452"/>
        <end position="459"/>
    </location>
</feature>
<feature type="strand" evidence="25">
    <location>
        <begin position="466"/>
        <end position="471"/>
    </location>
</feature>
<feature type="helix" evidence="25">
    <location>
        <begin position="475"/>
        <end position="484"/>
    </location>
</feature>
<feature type="strand" evidence="25">
    <location>
        <begin position="487"/>
        <end position="493"/>
    </location>
</feature>
<feature type="helix" evidence="25">
    <location>
        <begin position="508"/>
        <end position="510"/>
    </location>
</feature>
<feature type="strand" evidence="25">
    <location>
        <begin position="511"/>
        <end position="513"/>
    </location>
</feature>
<feature type="turn" evidence="25">
    <location>
        <begin position="517"/>
        <end position="519"/>
    </location>
</feature>
<feature type="helix" evidence="25">
    <location>
        <begin position="520"/>
        <end position="524"/>
    </location>
</feature>
<feature type="strand" evidence="25">
    <location>
        <begin position="525"/>
        <end position="532"/>
    </location>
</feature>
<reference key="1">
    <citation type="journal article" date="1998" name="Am. J. Hum. Genet.">
        <title>Two exon-skipping mutations as the molecular basis of succinic semialdehyde dehydrogenase deficiency (4-hydroxybutyric aciduria).</title>
        <authorList>
            <person name="Chambliss K.L."/>
            <person name="Hinson D.D."/>
            <person name="Trettel F."/>
            <person name="Malaspina P."/>
            <person name="Novelletto A."/>
            <person name="Jakobs C."/>
            <person name="Gibson K.M."/>
        </authorList>
    </citation>
    <scope>NUCLEOTIDE SEQUENCE [MRNA] (ISOFORM 1)</scope>
    <scope>CATALYTIC ACTIVITY</scope>
    <source>
        <tissue>Lymphocyte</tissue>
    </source>
</reference>
<reference key="2">
    <citation type="journal article" date="2002" name="Mol. Genet. Metab.">
        <title>Structure of human succinic semialdehyde dehydrogenase gene: identification of promoter region and alternatively processed isoforms.</title>
        <authorList>
            <person name="Blasi P."/>
            <person name="Boyl P.P."/>
            <person name="Ledda M."/>
            <person name="Novelletto A."/>
            <person name="Gibson K.M."/>
            <person name="Jakobs C."/>
            <person name="Hogema B."/>
            <person name="Akaboshi S."/>
            <person name="Loreni F."/>
            <person name="Malaspina P."/>
        </authorList>
    </citation>
    <scope>NUCLEOTIDE SEQUENCE [MRNA] (ISOFORM 1)</scope>
    <scope>NUCLEOTIDE SEQUENCE [MRNA] OF 69-535 (ISOFORM 2)</scope>
    <scope>ALTERNATIVE SPLICING</scope>
    <scope>VARIANTS ARG-36; TYR-180; LEU-182; SER-237; SER-372 AND ILE-406</scope>
    <scope>CATALYTIC ACTIVITY</scope>
    <scope>CHARACTERIZATION OF VARIANTS ARG-36; TYR-180; LEU-182 AND SER-237</scope>
    <source>
        <tissue>B-cell</tissue>
    </source>
</reference>
<reference key="3">
    <citation type="journal article" date="2004" name="Nat. Genet.">
        <title>Complete sequencing and characterization of 21,243 full-length human cDNAs.</title>
        <authorList>
            <person name="Ota T."/>
            <person name="Suzuki Y."/>
            <person name="Nishikawa T."/>
            <person name="Otsuki T."/>
            <person name="Sugiyama T."/>
            <person name="Irie R."/>
            <person name="Wakamatsu A."/>
            <person name="Hayashi K."/>
            <person name="Sato H."/>
            <person name="Nagai K."/>
            <person name="Kimura K."/>
            <person name="Makita H."/>
            <person name="Sekine M."/>
            <person name="Obayashi M."/>
            <person name="Nishi T."/>
            <person name="Shibahara T."/>
            <person name="Tanaka T."/>
            <person name="Ishii S."/>
            <person name="Yamamoto J."/>
            <person name="Saito K."/>
            <person name="Kawai Y."/>
            <person name="Isono Y."/>
            <person name="Nakamura Y."/>
            <person name="Nagahari K."/>
            <person name="Murakami K."/>
            <person name="Yasuda T."/>
            <person name="Iwayanagi T."/>
            <person name="Wagatsuma M."/>
            <person name="Shiratori A."/>
            <person name="Sudo H."/>
            <person name="Hosoiri T."/>
            <person name="Kaku Y."/>
            <person name="Kodaira H."/>
            <person name="Kondo H."/>
            <person name="Sugawara M."/>
            <person name="Takahashi M."/>
            <person name="Kanda K."/>
            <person name="Yokoi T."/>
            <person name="Furuya T."/>
            <person name="Kikkawa E."/>
            <person name="Omura Y."/>
            <person name="Abe K."/>
            <person name="Kamihara K."/>
            <person name="Katsuta N."/>
            <person name="Sato K."/>
            <person name="Tanikawa M."/>
            <person name="Yamazaki M."/>
            <person name="Ninomiya K."/>
            <person name="Ishibashi T."/>
            <person name="Yamashita H."/>
            <person name="Murakawa K."/>
            <person name="Fujimori K."/>
            <person name="Tanai H."/>
            <person name="Kimata M."/>
            <person name="Watanabe M."/>
            <person name="Hiraoka S."/>
            <person name="Chiba Y."/>
            <person name="Ishida S."/>
            <person name="Ono Y."/>
            <person name="Takiguchi S."/>
            <person name="Watanabe S."/>
            <person name="Yosida M."/>
            <person name="Hotuta T."/>
            <person name="Kusano J."/>
            <person name="Kanehori K."/>
            <person name="Takahashi-Fujii A."/>
            <person name="Hara H."/>
            <person name="Tanase T.-O."/>
            <person name="Nomura Y."/>
            <person name="Togiya S."/>
            <person name="Komai F."/>
            <person name="Hara R."/>
            <person name="Takeuchi K."/>
            <person name="Arita M."/>
            <person name="Imose N."/>
            <person name="Musashino K."/>
            <person name="Yuuki H."/>
            <person name="Oshima A."/>
            <person name="Sasaki N."/>
            <person name="Aotsuka S."/>
            <person name="Yoshikawa Y."/>
            <person name="Matsunawa H."/>
            <person name="Ichihara T."/>
            <person name="Shiohata N."/>
            <person name="Sano S."/>
            <person name="Moriya S."/>
            <person name="Momiyama H."/>
            <person name="Satoh N."/>
            <person name="Takami S."/>
            <person name="Terashima Y."/>
            <person name="Suzuki O."/>
            <person name="Nakagawa S."/>
            <person name="Senoh A."/>
            <person name="Mizoguchi H."/>
            <person name="Goto Y."/>
            <person name="Shimizu F."/>
            <person name="Wakebe H."/>
            <person name="Hishigaki H."/>
            <person name="Watanabe T."/>
            <person name="Sugiyama A."/>
            <person name="Takemoto M."/>
            <person name="Kawakami B."/>
            <person name="Yamazaki M."/>
            <person name="Watanabe K."/>
            <person name="Kumagai A."/>
            <person name="Itakura S."/>
            <person name="Fukuzumi Y."/>
            <person name="Fujimori Y."/>
            <person name="Komiyama M."/>
            <person name="Tashiro H."/>
            <person name="Tanigami A."/>
            <person name="Fujiwara T."/>
            <person name="Ono T."/>
            <person name="Yamada K."/>
            <person name="Fujii Y."/>
            <person name="Ozaki K."/>
            <person name="Hirao M."/>
            <person name="Ohmori Y."/>
            <person name="Kawabata A."/>
            <person name="Hikiji T."/>
            <person name="Kobatake N."/>
            <person name="Inagaki H."/>
            <person name="Ikema Y."/>
            <person name="Okamoto S."/>
            <person name="Okitani R."/>
            <person name="Kawakami T."/>
            <person name="Noguchi S."/>
            <person name="Itoh T."/>
            <person name="Shigeta K."/>
            <person name="Senba T."/>
            <person name="Matsumura K."/>
            <person name="Nakajima Y."/>
            <person name="Mizuno T."/>
            <person name="Morinaga M."/>
            <person name="Sasaki M."/>
            <person name="Togashi T."/>
            <person name="Oyama M."/>
            <person name="Hata H."/>
            <person name="Watanabe M."/>
            <person name="Komatsu T."/>
            <person name="Mizushima-Sugano J."/>
            <person name="Satoh T."/>
            <person name="Shirai Y."/>
            <person name="Takahashi Y."/>
            <person name="Nakagawa K."/>
            <person name="Okumura K."/>
            <person name="Nagase T."/>
            <person name="Nomura N."/>
            <person name="Kikuchi H."/>
            <person name="Masuho Y."/>
            <person name="Yamashita R."/>
            <person name="Nakai K."/>
            <person name="Yada T."/>
            <person name="Nakamura Y."/>
            <person name="Ohara O."/>
            <person name="Isogai T."/>
            <person name="Sugano S."/>
        </authorList>
    </citation>
    <scope>NUCLEOTIDE SEQUENCE [LARGE SCALE MRNA] (ISOFORM 1)</scope>
    <scope>VARIANT TYR-180</scope>
    <source>
        <tissue>Brain</tissue>
    </source>
</reference>
<reference key="4">
    <citation type="journal article" date="2003" name="Nature">
        <title>The DNA sequence and analysis of human chromosome 6.</title>
        <authorList>
            <person name="Mungall A.J."/>
            <person name="Palmer S.A."/>
            <person name="Sims S.K."/>
            <person name="Edwards C.A."/>
            <person name="Ashurst J.L."/>
            <person name="Wilming L."/>
            <person name="Jones M.C."/>
            <person name="Horton R."/>
            <person name="Hunt S.E."/>
            <person name="Scott C.E."/>
            <person name="Gilbert J.G.R."/>
            <person name="Clamp M.E."/>
            <person name="Bethel G."/>
            <person name="Milne S."/>
            <person name="Ainscough R."/>
            <person name="Almeida J.P."/>
            <person name="Ambrose K.D."/>
            <person name="Andrews T.D."/>
            <person name="Ashwell R.I.S."/>
            <person name="Babbage A.K."/>
            <person name="Bagguley C.L."/>
            <person name="Bailey J."/>
            <person name="Banerjee R."/>
            <person name="Barker D.J."/>
            <person name="Barlow K.F."/>
            <person name="Bates K."/>
            <person name="Beare D.M."/>
            <person name="Beasley H."/>
            <person name="Beasley O."/>
            <person name="Bird C.P."/>
            <person name="Blakey S.E."/>
            <person name="Bray-Allen S."/>
            <person name="Brook J."/>
            <person name="Brown A.J."/>
            <person name="Brown J.Y."/>
            <person name="Burford D.C."/>
            <person name="Burrill W."/>
            <person name="Burton J."/>
            <person name="Carder C."/>
            <person name="Carter N.P."/>
            <person name="Chapman J.C."/>
            <person name="Clark S.Y."/>
            <person name="Clark G."/>
            <person name="Clee C.M."/>
            <person name="Clegg S."/>
            <person name="Cobley V."/>
            <person name="Collier R.E."/>
            <person name="Collins J.E."/>
            <person name="Colman L.K."/>
            <person name="Corby N.R."/>
            <person name="Coville G.J."/>
            <person name="Culley K.M."/>
            <person name="Dhami P."/>
            <person name="Davies J."/>
            <person name="Dunn M."/>
            <person name="Earthrowl M.E."/>
            <person name="Ellington A.E."/>
            <person name="Evans K.A."/>
            <person name="Faulkner L."/>
            <person name="Francis M.D."/>
            <person name="Frankish A."/>
            <person name="Frankland J."/>
            <person name="French L."/>
            <person name="Garner P."/>
            <person name="Garnett J."/>
            <person name="Ghori M.J."/>
            <person name="Gilby L.M."/>
            <person name="Gillson C.J."/>
            <person name="Glithero R.J."/>
            <person name="Grafham D.V."/>
            <person name="Grant M."/>
            <person name="Gribble S."/>
            <person name="Griffiths C."/>
            <person name="Griffiths M.N.D."/>
            <person name="Hall R."/>
            <person name="Halls K.S."/>
            <person name="Hammond S."/>
            <person name="Harley J.L."/>
            <person name="Hart E.A."/>
            <person name="Heath P.D."/>
            <person name="Heathcott R."/>
            <person name="Holmes S.J."/>
            <person name="Howden P.J."/>
            <person name="Howe K.L."/>
            <person name="Howell G.R."/>
            <person name="Huckle E."/>
            <person name="Humphray S.J."/>
            <person name="Humphries M.D."/>
            <person name="Hunt A.R."/>
            <person name="Johnson C.M."/>
            <person name="Joy A.A."/>
            <person name="Kay M."/>
            <person name="Keenan S.J."/>
            <person name="Kimberley A.M."/>
            <person name="King A."/>
            <person name="Laird G.K."/>
            <person name="Langford C."/>
            <person name="Lawlor S."/>
            <person name="Leongamornlert D.A."/>
            <person name="Leversha M."/>
            <person name="Lloyd C.R."/>
            <person name="Lloyd D.M."/>
            <person name="Loveland J.E."/>
            <person name="Lovell J."/>
            <person name="Martin S."/>
            <person name="Mashreghi-Mohammadi M."/>
            <person name="Maslen G.L."/>
            <person name="Matthews L."/>
            <person name="McCann O.T."/>
            <person name="McLaren S.J."/>
            <person name="McLay K."/>
            <person name="McMurray A."/>
            <person name="Moore M.J.F."/>
            <person name="Mullikin J.C."/>
            <person name="Niblett D."/>
            <person name="Nickerson T."/>
            <person name="Novik K.L."/>
            <person name="Oliver K."/>
            <person name="Overton-Larty E.K."/>
            <person name="Parker A."/>
            <person name="Patel R."/>
            <person name="Pearce A.V."/>
            <person name="Peck A.I."/>
            <person name="Phillimore B.J.C.T."/>
            <person name="Phillips S."/>
            <person name="Plumb R.W."/>
            <person name="Porter K.M."/>
            <person name="Ramsey Y."/>
            <person name="Ranby S.A."/>
            <person name="Rice C.M."/>
            <person name="Ross M.T."/>
            <person name="Searle S.M."/>
            <person name="Sehra H.K."/>
            <person name="Sheridan E."/>
            <person name="Skuce C.D."/>
            <person name="Smith S."/>
            <person name="Smith M."/>
            <person name="Spraggon L."/>
            <person name="Squares S.L."/>
            <person name="Steward C.A."/>
            <person name="Sycamore N."/>
            <person name="Tamlyn-Hall G."/>
            <person name="Tester J."/>
            <person name="Theaker A.J."/>
            <person name="Thomas D.W."/>
            <person name="Thorpe A."/>
            <person name="Tracey A."/>
            <person name="Tromans A."/>
            <person name="Tubby B."/>
            <person name="Wall M."/>
            <person name="Wallis J.M."/>
            <person name="West A.P."/>
            <person name="White S.S."/>
            <person name="Whitehead S.L."/>
            <person name="Whittaker H."/>
            <person name="Wild A."/>
            <person name="Willey D.J."/>
            <person name="Wilmer T.E."/>
            <person name="Wood J.M."/>
            <person name="Wray P.W."/>
            <person name="Wyatt J.C."/>
            <person name="Young L."/>
            <person name="Younger R.M."/>
            <person name="Bentley D.R."/>
            <person name="Coulson A."/>
            <person name="Durbin R.M."/>
            <person name="Hubbard T."/>
            <person name="Sulston J.E."/>
            <person name="Dunham I."/>
            <person name="Rogers J."/>
            <person name="Beck S."/>
        </authorList>
    </citation>
    <scope>NUCLEOTIDE SEQUENCE [LARGE SCALE GENOMIC DNA]</scope>
</reference>
<reference key="5">
    <citation type="submission" date="2005-07" db="EMBL/GenBank/DDBJ databases">
        <authorList>
            <person name="Mural R.J."/>
            <person name="Istrail S."/>
            <person name="Sutton G."/>
            <person name="Florea L."/>
            <person name="Halpern A.L."/>
            <person name="Mobarry C.M."/>
            <person name="Lippert R."/>
            <person name="Walenz B."/>
            <person name="Shatkay H."/>
            <person name="Dew I."/>
            <person name="Miller J.R."/>
            <person name="Flanigan M.J."/>
            <person name="Edwards N.J."/>
            <person name="Bolanos R."/>
            <person name="Fasulo D."/>
            <person name="Halldorsson B.V."/>
            <person name="Hannenhalli S."/>
            <person name="Turner R."/>
            <person name="Yooseph S."/>
            <person name="Lu F."/>
            <person name="Nusskern D.R."/>
            <person name="Shue B.C."/>
            <person name="Zheng X.H."/>
            <person name="Zhong F."/>
            <person name="Delcher A.L."/>
            <person name="Huson D.H."/>
            <person name="Kravitz S.A."/>
            <person name="Mouchard L."/>
            <person name="Reinert K."/>
            <person name="Remington K.A."/>
            <person name="Clark A.G."/>
            <person name="Waterman M.S."/>
            <person name="Eichler E.E."/>
            <person name="Adams M.D."/>
            <person name="Hunkapiller M.W."/>
            <person name="Myers E.W."/>
            <person name="Venter J.C."/>
        </authorList>
    </citation>
    <scope>NUCLEOTIDE SEQUENCE [LARGE SCALE GENOMIC DNA]</scope>
</reference>
<reference key="6">
    <citation type="journal article" date="2004" name="Genome Res.">
        <title>The status, quality, and expansion of the NIH full-length cDNA project: the Mammalian Gene Collection (MGC).</title>
        <authorList>
            <consortium name="The MGC Project Team"/>
        </authorList>
    </citation>
    <scope>NUCLEOTIDE SEQUENCE [LARGE SCALE MRNA] (ISOFORM 1)</scope>
    <source>
        <tissue>Testis</tissue>
    </source>
</reference>
<reference key="7">
    <citation type="journal article" date="1995" name="J. Biol. Chem.">
        <title>Molecular cloning of the mature NAD(+)-dependent succinic semialdehyde dehydrogenase from rat and human. cDNA isolation, evolutionary homology, and tissue expression.</title>
        <authorList>
            <person name="Chambliss K.L."/>
            <person name="Caudle D.L."/>
            <person name="Hinson D.D."/>
            <person name="Moomaw C.R."/>
            <person name="Slaughter C.A."/>
            <person name="Jakobs C."/>
            <person name="Gibson K.M."/>
        </authorList>
    </citation>
    <scope>NUCLEOTIDE SEQUENCE [MRNA] OF 213-535 (ISOFORM 1)</scope>
    <source>
        <tissue>Liver</tissue>
    </source>
</reference>
<reference key="8">
    <citation type="journal article" date="1997" name="Adv. Exp. Med. Biol.">
        <title>Human succinic semialdehyde dehydrogenase. Molecular cloning and chromosomal localization.</title>
        <authorList>
            <person name="Trettel F."/>
            <person name="Malaspina P."/>
            <person name="Jodice C."/>
            <person name="Novelletto A."/>
            <person name="Slaughter C.A."/>
            <person name="Caudle D.L."/>
            <person name="Hinson D.D."/>
            <person name="Chambliss K.L."/>
            <person name="Gibson K.M."/>
        </authorList>
    </citation>
    <scope>SUBUNIT</scope>
    <source>
        <tissue>Brain</tissue>
    </source>
</reference>
<reference key="9">
    <citation type="journal article" date="2009" name="Science">
        <title>Lysine acetylation targets protein complexes and co-regulates major cellular functions.</title>
        <authorList>
            <person name="Choudhary C."/>
            <person name="Kumar C."/>
            <person name="Gnad F."/>
            <person name="Nielsen M.L."/>
            <person name="Rehman M."/>
            <person name="Walther T.C."/>
            <person name="Olsen J.V."/>
            <person name="Mann M."/>
        </authorList>
    </citation>
    <scope>ACETYLATION [LARGE SCALE ANALYSIS] AT LYS-126</scope>
    <scope>IDENTIFICATION BY MASS SPECTROMETRY [LARGE SCALE ANALYSIS]</scope>
</reference>
<reference key="10">
    <citation type="journal article" date="2011" name="BMC Syst. Biol.">
        <title>Initial characterization of the human central proteome.</title>
        <authorList>
            <person name="Burkard T.R."/>
            <person name="Planyavsky M."/>
            <person name="Kaupe I."/>
            <person name="Breitwieser F.P."/>
            <person name="Buerckstuemmer T."/>
            <person name="Bennett K.L."/>
            <person name="Superti-Furga G."/>
            <person name="Colinge J."/>
        </authorList>
    </citation>
    <scope>IDENTIFICATION BY MASS SPECTROMETRY [LARGE SCALE ANALYSIS]</scope>
</reference>
<reference key="11">
    <citation type="journal article" date="2014" name="J. Proteomics">
        <title>An enzyme assisted RP-RPLC approach for in-depth analysis of human liver phosphoproteome.</title>
        <authorList>
            <person name="Bian Y."/>
            <person name="Song C."/>
            <person name="Cheng K."/>
            <person name="Dong M."/>
            <person name="Wang F."/>
            <person name="Huang J."/>
            <person name="Sun D."/>
            <person name="Wang L."/>
            <person name="Ye M."/>
            <person name="Zou H."/>
        </authorList>
    </citation>
    <scope>PHOSPHORYLATION [LARGE SCALE ANALYSIS] AT SER-499</scope>
    <scope>IDENTIFICATION BY MASS SPECTROMETRY [LARGE SCALE ANALYSIS]</scope>
    <source>
        <tissue>Liver</tissue>
    </source>
</reference>
<reference key="12">
    <citation type="journal article" date="2009" name="EMBO J.">
        <title>Redox-switch modulation of human SSADH by dynamic catalytic loop.</title>
        <authorList>
            <person name="Kim Y.-G."/>
            <person name="Lee S."/>
            <person name="Kwon O.-S."/>
            <person name="Park S.-Y."/>
            <person name="Lee S.-J."/>
            <person name="Park B.-J."/>
            <person name="Kim K.-J."/>
        </authorList>
    </citation>
    <scope>X-RAY CRYSTALLOGRAPHY (2.0 ANGSTROMS) OF 49-535 IN COMPLEX WITH PRODUCT AND ADP</scope>
    <scope>FUNCTION</scope>
    <scope>ACTIVITY REGULATION</scope>
    <scope>DISULFIDE BOND</scope>
    <scope>MUTAGENESIS OF ARG-213; ARG-334; CYS-342 AND SER-498</scope>
    <scope>CATALYTIC ACTIVITY</scope>
</reference>
<reference key="13">
    <citation type="journal article" date="2001" name="Mol. Genet. Metab.">
        <title>Prenatal diagnosis of succinic semialdehyde dehydrogenase deficiency: increased accuracy employing DNA, enzyme, and metabolite analyses.</title>
        <authorList>
            <person name="Hogema B.M."/>
            <person name="Akaboshi S."/>
            <person name="Taylor M."/>
            <person name="Salomons G.S."/>
            <person name="Jakobs C."/>
            <person name="Schutgens R.B."/>
            <person name="Wilcken B."/>
            <person name="Worthington S."/>
            <person name="Maropoulos G."/>
            <person name="Grompe M."/>
            <person name="Gibson K.M."/>
        </authorList>
    </citation>
    <scope>VARIANTS SSADHD GLU-268 AND ASP-409</scope>
</reference>
<reference key="14">
    <citation type="journal article" date="2002" name="Hum. Hered.">
        <title>Mutation analysis in a patient with succinic semialdehyde dehydrogenase deficiency: a compound heterozygote with 103-121del and 1460T&gt;A of the ALDH5A1 gene.</title>
        <authorList>
            <person name="Aoshima T."/>
            <person name="Kajita M."/>
            <person name="Sekido Y."/>
            <person name="Ishiguro Y."/>
            <person name="Tsuge I."/>
            <person name="Kimura M."/>
            <person name="Yamaguchi S."/>
            <person name="Watanabe K."/>
            <person name="Shimokata K."/>
            <person name="Niwa T."/>
        </authorList>
    </citation>
    <scope>VARIANT SSADHD GLU-487</scope>
</reference>
<reference key="15">
    <citation type="journal article" date="2003" name="Hum. Mutat.">
        <title>Mutational spectrum of the succinate semialdehyde dehydrogenase (ALDH5A1) gene and functional analysis of 27 novel disease-causing mutations in patients with SSADH deficiency.</title>
        <authorList>
            <person name="Akaboshi S."/>
            <person name="Hogema B.M."/>
            <person name="Novelletto A."/>
            <person name="Malaspina P."/>
            <person name="Salomons G.S."/>
            <person name="Maropoulos G.D."/>
            <person name="Jakobs C."/>
            <person name="Grompe M."/>
            <person name="Gibson K.M."/>
        </authorList>
    </citation>
    <scope>VARIANTS SSADHD PHE-93; ARG-176; TYR-223; MET-233; SER-255; GLU-268; LYS-335; GLN-382; LEU-382; ASP-409 AND ARG-533</scope>
    <scope>VARIANTS ARG-36; TYR-180; LEU-182; SER-237 AND ILE-406</scope>
    <scope>CHARACTERIZATION OF VARIANTS ARG-36; PHE-93; ARG-176; TYR-180; LEU-182; TYR-223; MET-233; SER-237; SER-255; GLU-268; LYS-335; LEU-382; ASP-409 AND ARG-533</scope>
    <scope>CATALYTIC ACTIVITY</scope>
</reference>
<proteinExistence type="evidence at protein level"/>
<evidence type="ECO:0000250" key="1">
    <source>
        <dbReference type="UniProtKB" id="P20000"/>
    </source>
</evidence>
<evidence type="ECO:0000250" key="2">
    <source>
        <dbReference type="UniProtKB" id="Q8BWF0"/>
    </source>
</evidence>
<evidence type="ECO:0000255" key="3"/>
<evidence type="ECO:0000255" key="4">
    <source>
        <dbReference type="PROSITE-ProRule" id="PRU10007"/>
    </source>
</evidence>
<evidence type="ECO:0000255" key="5">
    <source>
        <dbReference type="PROSITE-ProRule" id="PRU10008"/>
    </source>
</evidence>
<evidence type="ECO:0000269" key="6">
    <source>
    </source>
</evidence>
<evidence type="ECO:0000269" key="7">
    <source>
    </source>
</evidence>
<evidence type="ECO:0000269" key="8">
    <source>
    </source>
</evidence>
<evidence type="ECO:0000269" key="9">
    <source>
    </source>
</evidence>
<evidence type="ECO:0000269" key="10">
    <source>
    </source>
</evidence>
<evidence type="ECO:0000269" key="11">
    <source>
    </source>
</evidence>
<evidence type="ECO:0000269" key="12">
    <source>
    </source>
</evidence>
<evidence type="ECO:0000269" key="13">
    <source>
    </source>
</evidence>
<evidence type="ECO:0000303" key="14">
    <source>
    </source>
</evidence>
<evidence type="ECO:0000305" key="15"/>
<evidence type="ECO:0000305" key="16">
    <source>
    </source>
</evidence>
<evidence type="ECO:0000305" key="17">
    <source>
    </source>
</evidence>
<evidence type="ECO:0000305" key="18">
    <source>
    </source>
</evidence>
<evidence type="ECO:0000305" key="19">
    <source>
    </source>
</evidence>
<evidence type="ECO:0000312" key="20">
    <source>
        <dbReference type="HGNC" id="HGNC:408"/>
    </source>
</evidence>
<evidence type="ECO:0007744" key="21">
    <source>
        <dbReference type="PDB" id="2W8Q"/>
    </source>
</evidence>
<evidence type="ECO:0007744" key="22">
    <source>
        <dbReference type="PDB" id="2W8R"/>
    </source>
</evidence>
<evidence type="ECO:0007744" key="23">
    <source>
    </source>
</evidence>
<evidence type="ECO:0007744" key="24">
    <source>
    </source>
</evidence>
<evidence type="ECO:0007829" key="25">
    <source>
        <dbReference type="PDB" id="2W8N"/>
    </source>
</evidence>
<evidence type="ECO:0007829" key="26">
    <source>
        <dbReference type="PDB" id="2W8O"/>
    </source>
</evidence>
<evidence type="ECO:0007829" key="27">
    <source>
        <dbReference type="PDB" id="2W8P"/>
    </source>
</evidence>
<accession>P51649</accession>
<accession>B2RD26</accession>
<accession>G5E949</accession>
<accession>Q546H9</accession>
<accession>Q8N3W6</accession>